<sequence>MQIILLDNVSNLGKLGEQVNVKAGYARNYLVPQGKAVPATRKNVEYFEKCRVELVAKLANIKSAAEARANKINELGSITILSKAGEEGKLFGSIGTRDIANAISMAGINTKKSEVRLPNGVLRTTGNHIVSIRIHSDISVAINVLVIAEK</sequence>
<keyword id="KW-1185">Reference proteome</keyword>
<keyword id="KW-0687">Ribonucleoprotein</keyword>
<keyword id="KW-0689">Ribosomal protein</keyword>
<keyword id="KW-0694">RNA-binding</keyword>
<keyword id="KW-0699">rRNA-binding</keyword>
<protein>
    <recommendedName>
        <fullName evidence="1">Large ribosomal subunit protein bL9</fullName>
    </recommendedName>
    <alternativeName>
        <fullName evidence="2">50S ribosomal protein L9</fullName>
    </alternativeName>
</protein>
<comment type="function">
    <text evidence="1">Binds to the 23S rRNA.</text>
</comment>
<comment type="similarity">
    <text evidence="1">Belongs to the bacterial ribosomal protein bL9 family.</text>
</comment>
<evidence type="ECO:0000255" key="1">
    <source>
        <dbReference type="HAMAP-Rule" id="MF_00503"/>
    </source>
</evidence>
<evidence type="ECO:0000305" key="2"/>
<name>RL9_BAUCH</name>
<reference key="1">
    <citation type="journal article" date="2006" name="PLoS Biol.">
        <title>Metabolic complementarity and genomics of the dual bacterial symbiosis of sharpshooters.</title>
        <authorList>
            <person name="Wu D."/>
            <person name="Daugherty S.C."/>
            <person name="Van Aken S.E."/>
            <person name="Pai G.H."/>
            <person name="Watkins K.L."/>
            <person name="Khouri H."/>
            <person name="Tallon L.J."/>
            <person name="Zaborsky J.M."/>
            <person name="Dunbar H.E."/>
            <person name="Tran P.L."/>
            <person name="Moran N.A."/>
            <person name="Eisen J.A."/>
        </authorList>
    </citation>
    <scope>NUCLEOTIDE SEQUENCE [LARGE SCALE GENOMIC DNA]</scope>
</reference>
<accession>Q1LSR5</accession>
<proteinExistence type="inferred from homology"/>
<organism>
    <name type="scientific">Baumannia cicadellinicola subsp. Homalodisca coagulata</name>
    <dbReference type="NCBI Taxonomy" id="374463"/>
    <lineage>
        <taxon>Bacteria</taxon>
        <taxon>Pseudomonadati</taxon>
        <taxon>Pseudomonadota</taxon>
        <taxon>Gammaproteobacteria</taxon>
        <taxon>Candidatus Palibaumannia</taxon>
    </lineage>
</organism>
<feature type="chain" id="PRO_0000258443" description="Large ribosomal subunit protein bL9">
    <location>
        <begin position="1"/>
        <end position="150"/>
    </location>
</feature>
<gene>
    <name evidence="1" type="primary">rplI</name>
    <name type="ordered locus">BCI_0571</name>
</gene>
<dbReference type="EMBL" id="CP000238">
    <property type="protein sequence ID" value="ABF13885.1"/>
    <property type="molecule type" value="Genomic_DNA"/>
</dbReference>
<dbReference type="RefSeq" id="WP_011520732.1">
    <property type="nucleotide sequence ID" value="NC_007984.1"/>
</dbReference>
<dbReference type="SMR" id="Q1LSR5"/>
<dbReference type="STRING" id="374463.BCI_0571"/>
<dbReference type="KEGG" id="bci:BCI_0571"/>
<dbReference type="HOGENOM" id="CLU_078938_4_1_6"/>
<dbReference type="OrthoDB" id="9788336at2"/>
<dbReference type="Proteomes" id="UP000002427">
    <property type="component" value="Chromosome"/>
</dbReference>
<dbReference type="GO" id="GO:1990904">
    <property type="term" value="C:ribonucleoprotein complex"/>
    <property type="evidence" value="ECO:0007669"/>
    <property type="project" value="UniProtKB-KW"/>
</dbReference>
<dbReference type="GO" id="GO:0005840">
    <property type="term" value="C:ribosome"/>
    <property type="evidence" value="ECO:0007669"/>
    <property type="project" value="UniProtKB-KW"/>
</dbReference>
<dbReference type="GO" id="GO:0019843">
    <property type="term" value="F:rRNA binding"/>
    <property type="evidence" value="ECO:0007669"/>
    <property type="project" value="UniProtKB-UniRule"/>
</dbReference>
<dbReference type="GO" id="GO:0003735">
    <property type="term" value="F:structural constituent of ribosome"/>
    <property type="evidence" value="ECO:0007669"/>
    <property type="project" value="InterPro"/>
</dbReference>
<dbReference type="GO" id="GO:0006412">
    <property type="term" value="P:translation"/>
    <property type="evidence" value="ECO:0007669"/>
    <property type="project" value="UniProtKB-UniRule"/>
</dbReference>
<dbReference type="FunFam" id="3.40.5.10:FF:000001">
    <property type="entry name" value="50S ribosomal protein L9"/>
    <property type="match status" value="1"/>
</dbReference>
<dbReference type="Gene3D" id="3.10.430.100">
    <property type="entry name" value="Ribosomal protein L9, C-terminal domain"/>
    <property type="match status" value="1"/>
</dbReference>
<dbReference type="Gene3D" id="3.40.5.10">
    <property type="entry name" value="Ribosomal protein L9, N-terminal domain"/>
    <property type="match status" value="1"/>
</dbReference>
<dbReference type="HAMAP" id="MF_00503">
    <property type="entry name" value="Ribosomal_bL9"/>
    <property type="match status" value="1"/>
</dbReference>
<dbReference type="InterPro" id="IPR000244">
    <property type="entry name" value="Ribosomal_bL9"/>
</dbReference>
<dbReference type="InterPro" id="IPR009027">
    <property type="entry name" value="Ribosomal_bL9/RNase_H1_N"/>
</dbReference>
<dbReference type="InterPro" id="IPR020594">
    <property type="entry name" value="Ribosomal_bL9_bac/chp"/>
</dbReference>
<dbReference type="InterPro" id="IPR020069">
    <property type="entry name" value="Ribosomal_bL9_C"/>
</dbReference>
<dbReference type="InterPro" id="IPR036791">
    <property type="entry name" value="Ribosomal_bL9_C_sf"/>
</dbReference>
<dbReference type="InterPro" id="IPR020070">
    <property type="entry name" value="Ribosomal_bL9_N"/>
</dbReference>
<dbReference type="InterPro" id="IPR036935">
    <property type="entry name" value="Ribosomal_bL9_N_sf"/>
</dbReference>
<dbReference type="NCBIfam" id="TIGR00158">
    <property type="entry name" value="L9"/>
    <property type="match status" value="1"/>
</dbReference>
<dbReference type="PANTHER" id="PTHR21368">
    <property type="entry name" value="50S RIBOSOMAL PROTEIN L9"/>
    <property type="match status" value="1"/>
</dbReference>
<dbReference type="Pfam" id="PF03948">
    <property type="entry name" value="Ribosomal_L9_C"/>
    <property type="match status" value="1"/>
</dbReference>
<dbReference type="Pfam" id="PF01281">
    <property type="entry name" value="Ribosomal_L9_N"/>
    <property type="match status" value="1"/>
</dbReference>
<dbReference type="SUPFAM" id="SSF55658">
    <property type="entry name" value="L9 N-domain-like"/>
    <property type="match status" value="1"/>
</dbReference>
<dbReference type="SUPFAM" id="SSF55653">
    <property type="entry name" value="Ribosomal protein L9 C-domain"/>
    <property type="match status" value="1"/>
</dbReference>
<dbReference type="PROSITE" id="PS00651">
    <property type="entry name" value="RIBOSOMAL_L9"/>
    <property type="match status" value="1"/>
</dbReference>